<reference key="1">
    <citation type="journal article" date="1989" name="Gene">
        <title>Domains of the SFL1 protein of yeasts are homologous to Myc oncoproteins or yeast heat-shock transcription factor.</title>
        <authorList>
            <person name="Fujita A."/>
            <person name="Kikuchi Y."/>
            <person name="Kuhara S."/>
            <person name="Misumi Y."/>
            <person name="Matsumoto S."/>
            <person name="Kobayashi H."/>
        </authorList>
    </citation>
    <scope>NUCLEOTIDE SEQUENCE [GENOMIC DNA]</scope>
</reference>
<reference key="2">
    <citation type="journal article" date="1997" name="Yeast">
        <title>DNA sequencing and analysis of 130 kb from yeast chromosome XV.</title>
        <authorList>
            <person name="Voss H."/>
            <person name="Benes V."/>
            <person name="Andrade M.A."/>
            <person name="Valencia A."/>
            <person name="Rechmann S."/>
            <person name="Teodoru C."/>
            <person name="Schwager C."/>
            <person name="Paces V."/>
            <person name="Sander C."/>
            <person name="Ansorge W."/>
        </authorList>
    </citation>
    <scope>NUCLEOTIDE SEQUENCE [GENOMIC DNA]</scope>
</reference>
<reference key="3">
    <citation type="journal article" date="1997" name="Nature">
        <title>The nucleotide sequence of Saccharomyces cerevisiae chromosome XV.</title>
        <authorList>
            <person name="Dujon B."/>
            <person name="Albermann K."/>
            <person name="Aldea M."/>
            <person name="Alexandraki D."/>
            <person name="Ansorge W."/>
            <person name="Arino J."/>
            <person name="Benes V."/>
            <person name="Bohn C."/>
            <person name="Bolotin-Fukuhara M."/>
            <person name="Bordonne R."/>
            <person name="Boyer J."/>
            <person name="Camasses A."/>
            <person name="Casamayor A."/>
            <person name="Casas C."/>
            <person name="Cheret G."/>
            <person name="Cziepluch C."/>
            <person name="Daignan-Fornier B."/>
            <person name="Dang V.-D."/>
            <person name="de Haan M."/>
            <person name="Delius H."/>
            <person name="Durand P."/>
            <person name="Fairhead C."/>
            <person name="Feldmann H."/>
            <person name="Gaillon L."/>
            <person name="Galisson F."/>
            <person name="Gamo F.-J."/>
            <person name="Gancedo C."/>
            <person name="Goffeau A."/>
            <person name="Goulding S.E."/>
            <person name="Grivell L.A."/>
            <person name="Habbig B."/>
            <person name="Hand N.J."/>
            <person name="Hani J."/>
            <person name="Hattenhorst U."/>
            <person name="Hebling U."/>
            <person name="Hernando Y."/>
            <person name="Herrero E."/>
            <person name="Heumann K."/>
            <person name="Hiesel R."/>
            <person name="Hilger F."/>
            <person name="Hofmann B."/>
            <person name="Hollenberg C.P."/>
            <person name="Hughes B."/>
            <person name="Jauniaux J.-C."/>
            <person name="Kalogeropoulos A."/>
            <person name="Katsoulou C."/>
            <person name="Kordes E."/>
            <person name="Lafuente M.J."/>
            <person name="Landt O."/>
            <person name="Louis E.J."/>
            <person name="Maarse A.C."/>
            <person name="Madania A."/>
            <person name="Mannhaupt G."/>
            <person name="Marck C."/>
            <person name="Martin R.P."/>
            <person name="Mewes H.-W."/>
            <person name="Michaux G."/>
            <person name="Paces V."/>
            <person name="Parle-McDermott A.G."/>
            <person name="Pearson B.M."/>
            <person name="Perrin A."/>
            <person name="Pettersson B."/>
            <person name="Poch O."/>
            <person name="Pohl T.M."/>
            <person name="Poirey R."/>
            <person name="Portetelle D."/>
            <person name="Pujol A."/>
            <person name="Purnelle B."/>
            <person name="Ramezani Rad M."/>
            <person name="Rechmann S."/>
            <person name="Schwager C."/>
            <person name="Schweizer M."/>
            <person name="Sor F."/>
            <person name="Sterky F."/>
            <person name="Tarassov I.A."/>
            <person name="Teodoru C."/>
            <person name="Tettelin H."/>
            <person name="Thierry A."/>
            <person name="Tobiasch E."/>
            <person name="Tzermia M."/>
            <person name="Uhlen M."/>
            <person name="Unseld M."/>
            <person name="Valens M."/>
            <person name="Vandenbol M."/>
            <person name="Vetter I."/>
            <person name="Vlcek C."/>
            <person name="Voet M."/>
            <person name="Volckaert G."/>
            <person name="Voss H."/>
            <person name="Wambutt R."/>
            <person name="Wedler H."/>
            <person name="Wiemann S."/>
            <person name="Winsor B."/>
            <person name="Wolfe K.H."/>
            <person name="Zollner A."/>
            <person name="Zumstein E."/>
            <person name="Kleine K."/>
        </authorList>
    </citation>
    <scope>NUCLEOTIDE SEQUENCE [LARGE SCALE GENOMIC DNA]</scope>
    <source>
        <strain>ATCC 204508 / S288c</strain>
    </source>
</reference>
<reference key="4">
    <citation type="journal article" date="2014" name="G3 (Bethesda)">
        <title>The reference genome sequence of Saccharomyces cerevisiae: Then and now.</title>
        <authorList>
            <person name="Engel S.R."/>
            <person name="Dietrich F.S."/>
            <person name="Fisk D.G."/>
            <person name="Binkley G."/>
            <person name="Balakrishnan R."/>
            <person name="Costanzo M.C."/>
            <person name="Dwight S.S."/>
            <person name="Hitz B.C."/>
            <person name="Karra K."/>
            <person name="Nash R.S."/>
            <person name="Weng S."/>
            <person name="Wong E.D."/>
            <person name="Lloyd P."/>
            <person name="Skrzypek M.S."/>
            <person name="Miyasato S.R."/>
            <person name="Simison M."/>
            <person name="Cherry J.M."/>
        </authorList>
    </citation>
    <scope>GENOME REANNOTATION</scope>
    <scope>SEQUENCE REVISION TO 446-454 AND 461-462</scope>
    <source>
        <strain>ATCC 204508 / S288c</strain>
    </source>
</reference>
<reference key="5">
    <citation type="journal article" date="2003" name="Nature">
        <title>Global analysis of protein localization in budding yeast.</title>
        <authorList>
            <person name="Huh W.-K."/>
            <person name="Falvo J.V."/>
            <person name="Gerke L.C."/>
            <person name="Carroll A.S."/>
            <person name="Howson R.W."/>
            <person name="Weissman J.S."/>
            <person name="O'Shea E.K."/>
        </authorList>
    </citation>
    <scope>SUBCELLULAR LOCATION [LARGE SCALE ANALYSIS]</scope>
</reference>
<reference key="6">
    <citation type="journal article" date="2003" name="Nature">
        <title>Global analysis of protein expression in yeast.</title>
        <authorList>
            <person name="Ghaemmaghami S."/>
            <person name="Huh W.-K."/>
            <person name="Bower K."/>
            <person name="Howson R.W."/>
            <person name="Belle A."/>
            <person name="Dephoure N."/>
            <person name="O'Shea E.K."/>
            <person name="Weissman J.S."/>
        </authorList>
    </citation>
    <scope>LEVEL OF PROTEIN EXPRESSION [LARGE SCALE ANALYSIS]</scope>
</reference>
<reference key="7">
    <citation type="journal article" date="2007" name="J. Proteome Res.">
        <title>Large-scale phosphorylation analysis of alpha-factor-arrested Saccharomyces cerevisiae.</title>
        <authorList>
            <person name="Li X."/>
            <person name="Gerber S.A."/>
            <person name="Rudner A.D."/>
            <person name="Beausoleil S.A."/>
            <person name="Haas W."/>
            <person name="Villen J."/>
            <person name="Elias J.E."/>
            <person name="Gygi S.P."/>
        </authorList>
    </citation>
    <scope>PHOSPHORYLATION [LARGE SCALE ANALYSIS] AT SER-220</scope>
    <scope>IDENTIFICATION BY MASS SPECTROMETRY [LARGE SCALE ANALYSIS]</scope>
    <source>
        <strain>ADR376</strain>
    </source>
</reference>
<reference key="8">
    <citation type="journal article" date="2008" name="Mol. Cell. Proteomics">
        <title>A multidimensional chromatography technology for in-depth phosphoproteome analysis.</title>
        <authorList>
            <person name="Albuquerque C.P."/>
            <person name="Smolka M.B."/>
            <person name="Payne S.H."/>
            <person name="Bafna V."/>
            <person name="Eng J."/>
            <person name="Zhou H."/>
        </authorList>
    </citation>
    <scope>PHOSPHORYLATION [LARGE SCALE ANALYSIS] AT SER-556</scope>
    <scope>IDENTIFICATION BY MASS SPECTROMETRY [LARGE SCALE ANALYSIS]</scope>
</reference>
<reference key="9">
    <citation type="journal article" date="2009" name="Science">
        <title>Global analysis of Cdk1 substrate phosphorylation sites provides insights into evolution.</title>
        <authorList>
            <person name="Holt L.J."/>
            <person name="Tuch B.B."/>
            <person name="Villen J."/>
            <person name="Johnson A.D."/>
            <person name="Gygi S.P."/>
            <person name="Morgan D.O."/>
        </authorList>
    </citation>
    <scope>PHOSPHORYLATION [LARGE SCALE ANALYSIS] AT SER-220; SER-556 AND SER-733</scope>
    <scope>IDENTIFICATION BY MASS SPECTROMETRY [LARGE SCALE ANALYSIS]</scope>
</reference>
<comment type="function">
    <text>Involved in cell surface assembly and regulation of the gene related to flocculation (asexual cell aggregation). Mutations in SFL1 causes constitutive cell aggregation.</text>
</comment>
<comment type="subcellular location">
    <subcellularLocation>
        <location evidence="3">Nucleus</location>
    </subcellularLocation>
</comment>
<comment type="miscellaneous">
    <text evidence="4">Present with 1040 molecules/cell in log phase SD medium.</text>
</comment>
<comment type="similarity">
    <text evidence="5">In the N-terminal section; belongs to the HSF family.</text>
</comment>
<dbReference type="EMBL" id="X94335">
    <property type="protein sequence ID" value="CAA64057.1"/>
    <property type="molecule type" value="Genomic_DNA"/>
</dbReference>
<dbReference type="EMBL" id="Z75047">
    <property type="protein sequence ID" value="CAA99338.1"/>
    <property type="molecule type" value="Genomic_DNA"/>
</dbReference>
<dbReference type="EMBL" id="BK006948">
    <property type="protein sequence ID" value="DAA10912.2"/>
    <property type="molecule type" value="Genomic_DNA"/>
</dbReference>
<dbReference type="PIR" id="S61694">
    <property type="entry name" value="S61694"/>
</dbReference>
<dbReference type="RefSeq" id="NP_014783.4">
    <property type="nucleotide sequence ID" value="NM_001183559.4"/>
</dbReference>
<dbReference type="SMR" id="P20134"/>
<dbReference type="BioGRID" id="34534">
    <property type="interactions" value="366"/>
</dbReference>
<dbReference type="DIP" id="DIP-5501N"/>
<dbReference type="FunCoup" id="P20134">
    <property type="interactions" value="779"/>
</dbReference>
<dbReference type="IntAct" id="P20134">
    <property type="interactions" value="5"/>
</dbReference>
<dbReference type="MINT" id="P20134"/>
<dbReference type="STRING" id="4932.YOR140W"/>
<dbReference type="GlyGen" id="P20134">
    <property type="glycosylation" value="2 sites, 1 O-linked glycan (1 site)"/>
</dbReference>
<dbReference type="iPTMnet" id="P20134"/>
<dbReference type="PaxDb" id="4932-YOR140W"/>
<dbReference type="PeptideAtlas" id="P20134"/>
<dbReference type="EnsemblFungi" id="YOR140W_mRNA">
    <property type="protein sequence ID" value="YOR140W"/>
    <property type="gene ID" value="YOR140W"/>
</dbReference>
<dbReference type="GeneID" id="854307"/>
<dbReference type="KEGG" id="sce:YOR140W"/>
<dbReference type="AGR" id="SGD:S000005666"/>
<dbReference type="SGD" id="S000005666">
    <property type="gene designation" value="SFL1"/>
</dbReference>
<dbReference type="VEuPathDB" id="FungiDB:YOR140W"/>
<dbReference type="eggNOG" id="KOG0627">
    <property type="taxonomic scope" value="Eukaryota"/>
</dbReference>
<dbReference type="HOGENOM" id="CLU_371782_0_0_1"/>
<dbReference type="InParanoid" id="P20134"/>
<dbReference type="OMA" id="PYLMMNP"/>
<dbReference type="OrthoDB" id="60033at2759"/>
<dbReference type="BioCyc" id="YEAST:G3O-33661-MONOMER"/>
<dbReference type="BioGRID-ORCS" id="854307">
    <property type="hits" value="0 hits in 13 CRISPR screens"/>
</dbReference>
<dbReference type="PRO" id="PR:P20134"/>
<dbReference type="Proteomes" id="UP000002311">
    <property type="component" value="Chromosome XV"/>
</dbReference>
<dbReference type="RNAct" id="P20134">
    <property type="molecule type" value="protein"/>
</dbReference>
<dbReference type="GO" id="GO:0005634">
    <property type="term" value="C:nucleus"/>
    <property type="evidence" value="ECO:0000314"/>
    <property type="project" value="SGD"/>
</dbReference>
<dbReference type="GO" id="GO:0000981">
    <property type="term" value="F:DNA-binding transcription factor activity, RNA polymerase II-specific"/>
    <property type="evidence" value="ECO:0000353"/>
    <property type="project" value="SGD"/>
</dbReference>
<dbReference type="GO" id="GO:0000978">
    <property type="term" value="F:RNA polymerase II cis-regulatory region sequence-specific DNA binding"/>
    <property type="evidence" value="ECO:0000314"/>
    <property type="project" value="SGD"/>
</dbReference>
<dbReference type="GO" id="GO:0061629">
    <property type="term" value="F:RNA polymerase II-specific DNA-binding transcription factor binding"/>
    <property type="evidence" value="ECO:0000353"/>
    <property type="project" value="SGD"/>
</dbReference>
<dbReference type="GO" id="GO:0043565">
    <property type="term" value="F:sequence-specific DNA binding"/>
    <property type="evidence" value="ECO:0000314"/>
    <property type="project" value="SGD"/>
</dbReference>
<dbReference type="GO" id="GO:2000218">
    <property type="term" value="P:negative regulation of invasive growth in response to glucose limitation"/>
    <property type="evidence" value="ECO:0000315"/>
    <property type="project" value="SGD"/>
</dbReference>
<dbReference type="GO" id="GO:2000221">
    <property type="term" value="P:negative regulation of pseudohyphal growth"/>
    <property type="evidence" value="ECO:0000315"/>
    <property type="project" value="SGD"/>
</dbReference>
<dbReference type="GO" id="GO:0000122">
    <property type="term" value="P:negative regulation of transcription by RNA polymerase II"/>
    <property type="evidence" value="ECO:0000315"/>
    <property type="project" value="SGD"/>
</dbReference>
<dbReference type="GO" id="GO:0045944">
    <property type="term" value="P:positive regulation of transcription by RNA polymerase II"/>
    <property type="evidence" value="ECO:0000315"/>
    <property type="project" value="SGD"/>
</dbReference>
<dbReference type="Gene3D" id="1.10.10.10">
    <property type="entry name" value="Winged helix-like DNA-binding domain superfamily/Winged helix DNA-binding domain"/>
    <property type="match status" value="1"/>
</dbReference>
<dbReference type="InterPro" id="IPR000232">
    <property type="entry name" value="HSF_DNA-bd"/>
</dbReference>
<dbReference type="InterPro" id="IPR036388">
    <property type="entry name" value="WH-like_DNA-bd_sf"/>
</dbReference>
<dbReference type="InterPro" id="IPR036390">
    <property type="entry name" value="WH_DNA-bd_sf"/>
</dbReference>
<dbReference type="PANTHER" id="PTHR10015:SF396">
    <property type="entry name" value="FLOCCULATION SUPPRESSION PROTEIN"/>
    <property type="match status" value="1"/>
</dbReference>
<dbReference type="PANTHER" id="PTHR10015">
    <property type="entry name" value="HEAT SHOCK TRANSCRIPTION FACTOR"/>
    <property type="match status" value="1"/>
</dbReference>
<dbReference type="Pfam" id="PF00447">
    <property type="entry name" value="HSF_DNA-bind"/>
    <property type="match status" value="1"/>
</dbReference>
<dbReference type="PRINTS" id="PR00056">
    <property type="entry name" value="HSFDOMAIN"/>
</dbReference>
<dbReference type="SMART" id="SM00415">
    <property type="entry name" value="HSF"/>
    <property type="match status" value="1"/>
</dbReference>
<dbReference type="SUPFAM" id="SSF46785">
    <property type="entry name" value="Winged helix' DNA-binding domain"/>
    <property type="match status" value="1"/>
</dbReference>
<dbReference type="PROSITE" id="PS00434">
    <property type="entry name" value="HSF_DOMAIN"/>
    <property type="match status" value="1"/>
</dbReference>
<organism>
    <name type="scientific">Saccharomyces cerevisiae (strain ATCC 204508 / S288c)</name>
    <name type="common">Baker's yeast</name>
    <dbReference type="NCBI Taxonomy" id="559292"/>
    <lineage>
        <taxon>Eukaryota</taxon>
        <taxon>Fungi</taxon>
        <taxon>Dikarya</taxon>
        <taxon>Ascomycota</taxon>
        <taxon>Saccharomycotina</taxon>
        <taxon>Saccharomycetes</taxon>
        <taxon>Saccharomycetales</taxon>
        <taxon>Saccharomycetaceae</taxon>
        <taxon>Saccharomyces</taxon>
    </lineage>
</organism>
<protein>
    <recommendedName>
        <fullName>Flocculation suppression protein</fullName>
    </recommendedName>
    <alternativeName>
        <fullName>Protein SFL1</fullName>
    </alternativeName>
</protein>
<proteinExistence type="evidence at protein level"/>
<feature type="chain" id="PRO_0000124595" description="Flocculation suppression protein">
    <location>
        <begin position="1"/>
        <end position="766"/>
    </location>
</feature>
<feature type="DNA-binding region" evidence="1">
    <location>
        <begin position="64"/>
        <end position="186"/>
    </location>
</feature>
<feature type="region of interest" description="Disordered" evidence="2">
    <location>
        <begin position="1"/>
        <end position="52"/>
    </location>
</feature>
<feature type="region of interest" description="Disordered" evidence="2">
    <location>
        <begin position="129"/>
        <end position="181"/>
    </location>
</feature>
<feature type="region of interest" description="Disordered" evidence="2">
    <location>
        <begin position="203"/>
        <end position="247"/>
    </location>
</feature>
<feature type="region of interest" description="Disordered" evidence="2">
    <location>
        <begin position="547"/>
        <end position="619"/>
    </location>
</feature>
<feature type="region of interest" description="Disordered" evidence="2">
    <location>
        <begin position="657"/>
        <end position="766"/>
    </location>
</feature>
<feature type="compositionally biased region" description="Low complexity" evidence="2">
    <location>
        <begin position="8"/>
        <end position="19"/>
    </location>
</feature>
<feature type="compositionally biased region" description="Low complexity" evidence="2">
    <location>
        <begin position="134"/>
        <end position="147"/>
    </location>
</feature>
<feature type="compositionally biased region" description="Basic and acidic residues" evidence="2">
    <location>
        <begin position="171"/>
        <end position="181"/>
    </location>
</feature>
<feature type="compositionally biased region" description="Low complexity" evidence="2">
    <location>
        <begin position="208"/>
        <end position="224"/>
    </location>
</feature>
<feature type="compositionally biased region" description="Polar residues" evidence="2">
    <location>
        <begin position="236"/>
        <end position="247"/>
    </location>
</feature>
<feature type="compositionally biased region" description="Polar residues" evidence="2">
    <location>
        <begin position="679"/>
        <end position="699"/>
    </location>
</feature>
<feature type="compositionally biased region" description="Low complexity" evidence="2">
    <location>
        <begin position="708"/>
        <end position="719"/>
    </location>
</feature>
<feature type="compositionally biased region" description="Polar residues" evidence="2">
    <location>
        <begin position="738"/>
        <end position="750"/>
    </location>
</feature>
<feature type="modified residue" description="Phosphoserine" evidence="6 8">
    <location>
        <position position="220"/>
    </location>
</feature>
<feature type="modified residue" description="Phosphoserine" evidence="7 8">
    <location>
        <position position="556"/>
    </location>
</feature>
<feature type="modified residue" description="Phosphoserine" evidence="8">
    <location>
        <position position="733"/>
    </location>
</feature>
<feature type="sequence conflict" description="In Ref. 2; CAA64057 and 3; CAA99338." evidence="5" ref="2 3">
    <original>FVQYQPQSQ</original>
    <variation>LYNTNRSRN</variation>
    <location>
        <begin position="446"/>
        <end position="454"/>
    </location>
</feature>
<feature type="sequence conflict" description="In Ref. 2; CAA64057 and 3; CAA99338." evidence="5" ref="2 3">
    <original>KQ</original>
    <variation>SE</variation>
    <location>
        <begin position="461"/>
        <end position="462"/>
    </location>
</feature>
<name>SFL1_YEAST</name>
<sequence>MSEEETVSAPAPASTPAPAGTDVGSGGAAAGIANAGAEGGDGAEDVKKHGSKMLVGPRPPQNAIFIHKLYQILEDESLHDLIWWTPSGLSFMIKPVERFSKALATYFKHTNITSFVRQLNIYGFHKVSHDHSSNDANSGDDANTNDDSNTHDDNSGNKNSSGDENTGGGVQEKEKSNPTKIWEFKHSSGIFKKGDIEGLKHIKRRASSRNNSSINSRKNSSNQNYDIDSGARVRPSSIQDPSTSSNSFGNFVPQIPGANNSIPEYFNNSHVTYENANHAPLESNNPEMQEQNRPPNFQDETLKHLKEINFDMVKIIESMQHFISLQHSFCSQSFTFKNVSKKKSENIVKDHQKQLQAFESDMLTFKQHVMSRAHRTIDSLCAVNAAATAASVAPAPAPTSTSAYAPKSQYEMMVPPGNQYVPQKSSSTTNIPSRFNTASVPPSQLFVQYQPQSQQHVTYAKQPAHVPNFINQPIPIQQLPPQYADTFSTPQMMHNPFASKNNNKPGNTKRTNSVLMDPLTPAASVGVQGPLNYPIMNINPSVRDYNKPVPQNMAPSPIYPINEPTTRLYSQPKMRSLGSTSSLPNDRRNSPLKLTPRSSLNEDSLYPKPRNSLKSSISGTSLSSSFTLVANNPAPIRYSQQGLLRSLNKAANCAPDSVTPLDSSVLTGPPPKNMDNLPAVSSNLINSPMNVEHSSSLSQAEPAPQIELPQPSLPTTSTTKNTGEADNSKRKGSGVYSLLNQEDSSTSSADPKTEDKAAPALKKVKM</sequence>
<keyword id="KW-0238">DNA-binding</keyword>
<keyword id="KW-0539">Nucleus</keyword>
<keyword id="KW-0597">Phosphoprotein</keyword>
<keyword id="KW-1185">Reference proteome</keyword>
<keyword id="KW-0804">Transcription</keyword>
<keyword id="KW-0805">Transcription regulation</keyword>
<evidence type="ECO:0000250" key="1"/>
<evidence type="ECO:0000256" key="2">
    <source>
        <dbReference type="SAM" id="MobiDB-lite"/>
    </source>
</evidence>
<evidence type="ECO:0000269" key="3">
    <source>
    </source>
</evidence>
<evidence type="ECO:0000269" key="4">
    <source>
    </source>
</evidence>
<evidence type="ECO:0000305" key="5"/>
<evidence type="ECO:0007744" key="6">
    <source>
    </source>
</evidence>
<evidence type="ECO:0007744" key="7">
    <source>
    </source>
</evidence>
<evidence type="ECO:0007744" key="8">
    <source>
    </source>
</evidence>
<accession>P20134</accession>
<accession>D6W2J6</accession>
<accession>Q99194</accession>
<gene>
    <name type="primary">SFL1</name>
    <name type="ordered locus">YOR140W</name>
    <name type="ORF">YOR3339W</name>
</gene>